<dbReference type="EMBL" id="S73471">
    <property type="protein sequence ID" value="AAB32593.2"/>
    <property type="molecule type" value="mRNA"/>
</dbReference>
<dbReference type="RefSeq" id="NP_001075797.1">
    <property type="nucleotide sequence ID" value="NM_001082328.1"/>
</dbReference>
<dbReference type="FunCoup" id="P47789">
    <property type="interactions" value="16"/>
</dbReference>
<dbReference type="STRING" id="9986.ENSOCUP00000012723"/>
<dbReference type="PaxDb" id="9986-ENSOCUP00000012723"/>
<dbReference type="GeneID" id="100009169"/>
<dbReference type="KEGG" id="ocu:100009169"/>
<dbReference type="CTD" id="5354"/>
<dbReference type="eggNOG" id="KOG4800">
    <property type="taxonomic scope" value="Eukaryota"/>
</dbReference>
<dbReference type="HOGENOM" id="CLU_064167_2_1_1"/>
<dbReference type="InParanoid" id="P47789"/>
<dbReference type="OMA" id="AVCKTRE"/>
<dbReference type="OrthoDB" id="9993736at2759"/>
<dbReference type="TreeFam" id="TF315162"/>
<dbReference type="Proteomes" id="UP000001811">
    <property type="component" value="Unplaced"/>
</dbReference>
<dbReference type="GO" id="GO:0043209">
    <property type="term" value="C:myelin sheath"/>
    <property type="evidence" value="ECO:0007669"/>
    <property type="project" value="UniProtKB-SubCell"/>
</dbReference>
<dbReference type="GO" id="GO:0005886">
    <property type="term" value="C:plasma membrane"/>
    <property type="evidence" value="ECO:0000250"/>
    <property type="project" value="UniProtKB"/>
</dbReference>
<dbReference type="GO" id="GO:0019911">
    <property type="term" value="F:structural constituent of myelin sheath"/>
    <property type="evidence" value="ECO:0007669"/>
    <property type="project" value="TreeGrafter"/>
</dbReference>
<dbReference type="GO" id="GO:0061564">
    <property type="term" value="P:axon development"/>
    <property type="evidence" value="ECO:0007669"/>
    <property type="project" value="TreeGrafter"/>
</dbReference>
<dbReference type="GO" id="GO:0022010">
    <property type="term" value="P:central nervous system myelination"/>
    <property type="evidence" value="ECO:0007669"/>
    <property type="project" value="TreeGrafter"/>
</dbReference>
<dbReference type="InterPro" id="IPR001614">
    <property type="entry name" value="Myelin_PLP"/>
</dbReference>
<dbReference type="InterPro" id="IPR018237">
    <property type="entry name" value="Myelin_PLP_CS"/>
</dbReference>
<dbReference type="PANTHER" id="PTHR11683">
    <property type="entry name" value="MYELIN PROTEOLIPID"/>
    <property type="match status" value="1"/>
</dbReference>
<dbReference type="PANTHER" id="PTHR11683:SF11">
    <property type="entry name" value="MYELIN PROTEOLIPID PROTEIN"/>
    <property type="match status" value="1"/>
</dbReference>
<dbReference type="Pfam" id="PF01275">
    <property type="entry name" value="Myelin_PLP"/>
    <property type="match status" value="1"/>
</dbReference>
<dbReference type="PRINTS" id="PR00214">
    <property type="entry name" value="MYELINPLP"/>
</dbReference>
<dbReference type="SMART" id="SM00002">
    <property type="entry name" value="PLP"/>
    <property type="match status" value="1"/>
</dbReference>
<dbReference type="PROSITE" id="PS00575">
    <property type="entry name" value="MYELIN_PLP_1"/>
    <property type="match status" value="1"/>
</dbReference>
<dbReference type="PROSITE" id="PS01004">
    <property type="entry name" value="MYELIN_PLP_2"/>
    <property type="match status" value="1"/>
</dbReference>
<protein>
    <recommendedName>
        <fullName>Myelin proteolipid protein</fullName>
        <shortName>PLP</shortName>
    </recommendedName>
    <alternativeName>
        <fullName>Lipophilin</fullName>
    </alternativeName>
</protein>
<proteinExistence type="evidence at protein level"/>
<evidence type="ECO:0000250" key="1"/>
<evidence type="ECO:0000250" key="2">
    <source>
        <dbReference type="UniProtKB" id="P60201"/>
    </source>
</evidence>
<evidence type="ECO:0000250" key="3">
    <source>
        <dbReference type="UniProtKB" id="P60203"/>
    </source>
</evidence>
<evidence type="ECO:0000255" key="4"/>
<evidence type="ECO:0000269" key="5">
    <source>
    </source>
</evidence>
<evidence type="ECO:0000305" key="6"/>
<feature type="chain" id="PRO_0000159009" description="Myelin proteolipid protein">
    <location>
        <begin position="1"/>
        <end position="277"/>
    </location>
</feature>
<feature type="topological domain" description="Cytoplasmic" evidence="4">
    <location>
        <begin position="1"/>
        <end position="10"/>
    </location>
</feature>
<feature type="transmembrane region" description="Helical; Name=1" evidence="4">
    <location>
        <begin position="11"/>
        <end position="36"/>
    </location>
</feature>
<feature type="topological domain" description="Extracellular" evidence="4">
    <location>
        <begin position="37"/>
        <end position="59"/>
    </location>
</feature>
<feature type="transmembrane region" description="Helical; Name=2" evidence="4">
    <location>
        <begin position="60"/>
        <end position="88"/>
    </location>
</feature>
<feature type="topological domain" description="Cytoplasmic" evidence="4">
    <location>
        <begin position="89"/>
        <end position="151"/>
    </location>
</feature>
<feature type="transmembrane region" description="Helical; Name=3" evidence="4">
    <location>
        <begin position="152"/>
        <end position="178"/>
    </location>
</feature>
<feature type="topological domain" description="Extracellular" evidence="4">
    <location>
        <begin position="179"/>
        <end position="238"/>
    </location>
</feature>
<feature type="transmembrane region" description="Helical; Name=4" evidence="4">
    <location>
        <begin position="239"/>
        <end position="268"/>
    </location>
</feature>
<feature type="topological domain" description="Cytoplasmic" evidence="4">
    <location>
        <begin position="269"/>
        <end position="277"/>
    </location>
</feature>
<feature type="modified residue" description="Phosphoserine" evidence="3">
    <location>
        <position position="114"/>
    </location>
</feature>
<feature type="modified residue" description="Phosphothreonine" evidence="3">
    <location>
        <position position="116"/>
    </location>
</feature>
<feature type="modified residue" description="Phosphothreonine" evidence="3">
    <location>
        <position position="118"/>
    </location>
</feature>
<feature type="lipid moiety-binding region" description="S-palmitoyl cysteine" evidence="1">
    <location>
        <position position="6"/>
    </location>
</feature>
<feature type="lipid moiety-binding region" description="S-palmitoyl cysteine" evidence="1">
    <location>
        <position position="7"/>
    </location>
</feature>
<feature type="lipid moiety-binding region" description="S-palmitoyl cysteine" evidence="1">
    <location>
        <position position="10"/>
    </location>
</feature>
<feature type="lipid moiety-binding region" description="S-palmitoyl cysteine" evidence="1">
    <location>
        <position position="109"/>
    </location>
</feature>
<feature type="lipid moiety-binding region" description="S-palmitoyl cysteine" evidence="1">
    <location>
        <position position="139"/>
    </location>
</feature>
<feature type="lipid moiety-binding region" description="S-palmitoyl cysteine" evidence="1">
    <location>
        <position position="141"/>
    </location>
</feature>
<feature type="lipid moiety-binding region" description="O-palmitoyl threonine" evidence="1">
    <location>
        <position position="199"/>
    </location>
</feature>
<feature type="disulfide bond" evidence="1">
    <location>
        <begin position="184"/>
        <end position="228"/>
    </location>
</feature>
<feature type="disulfide bond" evidence="1">
    <location>
        <begin position="201"/>
        <end position="220"/>
    </location>
</feature>
<feature type="sequence variant" description="In pt." evidence="5">
    <original>H</original>
    <variation>Q</variation>
    <location>
        <position position="37"/>
    </location>
</feature>
<keyword id="KW-1003">Cell membrane</keyword>
<keyword id="KW-0225">Disease variant</keyword>
<keyword id="KW-1015">Disulfide bond</keyword>
<keyword id="KW-0449">Lipoprotein</keyword>
<keyword id="KW-0472">Membrane</keyword>
<keyword id="KW-0564">Palmitate</keyword>
<keyword id="KW-0597">Phosphoprotein</keyword>
<keyword id="KW-1185">Reference proteome</keyword>
<keyword id="KW-0812">Transmembrane</keyword>
<keyword id="KW-1133">Transmembrane helix</keyword>
<name>MYPR_RABIT</name>
<comment type="function">
    <text>This is the major myelin protein from the central nervous system. It plays an important role in the formation or maintenance of the multilamellar structure of myelin.</text>
</comment>
<comment type="subunit">
    <text evidence="2">Interacts with MAL.</text>
</comment>
<comment type="subcellular location">
    <subcellularLocation>
        <location evidence="1">Cell membrane</location>
        <topology evidence="1">Multi-pass membrane protein</topology>
    </subcellularLocation>
    <subcellularLocation>
        <location evidence="1">Myelin membrane</location>
    </subcellularLocation>
    <text evidence="1">Colocalizes with SIRT2 in internodal regions, at paranodal axoglial junction and Schmidt-Lanterman incisures of myelin sheat.</text>
</comment>
<comment type="disease">
    <text>Defects in PLP1 are the cause of paralytic tremor (pt); a sex-linked mutation in rabbit that affects myelination of the CNS.</text>
</comment>
<comment type="similarity">
    <text evidence="6">Belongs to the myelin proteolipid protein family.</text>
</comment>
<accession>P47789</accession>
<reference key="1">
    <citation type="journal article" date="1994" name="J. Neurochem.">
        <title>Paralytic tremor (pt): a new allele of the proteolipid protein gene in rabbits.</title>
        <authorList>
            <person name="Tosic M."/>
            <person name="Dolivo M."/>
            <person name="Domanska-Janik K."/>
            <person name="Matthieu J.-M."/>
        </authorList>
    </citation>
    <scope>NUCLEOTIDE SEQUENCE [MRNA]</scope>
    <scope>VARIANT PT GLN-37</scope>
    <source>
        <tissue>Brain</tissue>
    </source>
</reference>
<organism>
    <name type="scientific">Oryctolagus cuniculus</name>
    <name type="common">Rabbit</name>
    <dbReference type="NCBI Taxonomy" id="9986"/>
    <lineage>
        <taxon>Eukaryota</taxon>
        <taxon>Metazoa</taxon>
        <taxon>Chordata</taxon>
        <taxon>Craniata</taxon>
        <taxon>Vertebrata</taxon>
        <taxon>Euteleostomi</taxon>
        <taxon>Mammalia</taxon>
        <taxon>Eutheria</taxon>
        <taxon>Euarchontoglires</taxon>
        <taxon>Glires</taxon>
        <taxon>Lagomorpha</taxon>
        <taxon>Leporidae</taxon>
        <taxon>Oryctolagus</taxon>
    </lineage>
</organism>
<sequence>MGLLECCARCLVGAPFASLVATGLCFFGVALFCGCGHEALTGTEKLIETYFSKNYQDYEYLINVIHAFQYVIYGTASFFFLYGALLLAEGFYTTGAVRQIFGDYKTTICGKGLSATVTGGQKGRGSRGQHQAHSLERVCHCLGKWLGHPDKFVGITYALTVVWLLVFACSAVPVYIYFNTWTTCQSIAFPSKTSASIGTLCADARMYGVLPWNAFPGKVCGSNLLSICKTAEFQMTFHLFIAAFVGAAATLVSLLTFMIAATYNFAVLKLMGRGTKF</sequence>
<gene>
    <name type="primary">PLP1</name>
    <name type="synonym">PLP</name>
</gene>